<name>RL23_HYDS0</name>
<proteinExistence type="inferred from homology"/>
<organism>
    <name type="scientific">Hydrogenobaculum sp. (strain Y04AAS1)</name>
    <dbReference type="NCBI Taxonomy" id="380749"/>
    <lineage>
        <taxon>Bacteria</taxon>
        <taxon>Pseudomonadati</taxon>
        <taxon>Aquificota</taxon>
        <taxon>Aquificia</taxon>
        <taxon>Aquificales</taxon>
        <taxon>Aquificaceae</taxon>
        <taxon>Hydrogenobaculum</taxon>
    </lineage>
</organism>
<feature type="chain" id="PRO_1000144577" description="Large ribosomal subunit protein uL23">
    <location>
        <begin position="1"/>
        <end position="99"/>
    </location>
</feature>
<protein>
    <recommendedName>
        <fullName evidence="1">Large ribosomal subunit protein uL23</fullName>
    </recommendedName>
    <alternativeName>
        <fullName evidence="2">50S ribosomal protein L23</fullName>
    </alternativeName>
</protein>
<evidence type="ECO:0000255" key="1">
    <source>
        <dbReference type="HAMAP-Rule" id="MF_01369"/>
    </source>
</evidence>
<evidence type="ECO:0000305" key="2"/>
<comment type="function">
    <text evidence="1">One of the early assembly proteins it binds 23S rRNA. One of the proteins that surrounds the polypeptide exit tunnel on the outside of the ribosome. Forms the main docking site for trigger factor binding to the ribosome.</text>
</comment>
<comment type="subunit">
    <text evidence="1">Part of the 50S ribosomal subunit. Contacts protein L29, and trigger factor when it is bound to the ribosome.</text>
</comment>
<comment type="similarity">
    <text evidence="1">Belongs to the universal ribosomal protein uL23 family.</text>
</comment>
<accession>B4U746</accession>
<reference key="1">
    <citation type="journal article" date="2009" name="J. Bacteriol.">
        <title>Complete and draft genome sequences of six members of the Aquificales.</title>
        <authorList>
            <person name="Reysenbach A.-L."/>
            <person name="Hamamura N."/>
            <person name="Podar M."/>
            <person name="Griffiths E."/>
            <person name="Ferreira S."/>
            <person name="Hochstein R."/>
            <person name="Heidelberg J."/>
            <person name="Johnson J."/>
            <person name="Mead D."/>
            <person name="Pohorille A."/>
            <person name="Sarmiento M."/>
            <person name="Schweighofer K."/>
            <person name="Seshadri R."/>
            <person name="Voytek M.A."/>
        </authorList>
    </citation>
    <scope>NUCLEOTIDE SEQUENCE [LARGE SCALE GENOMIC DNA]</scope>
    <source>
        <strain>Y04AAS1</strain>
    </source>
</reference>
<keyword id="KW-0687">Ribonucleoprotein</keyword>
<keyword id="KW-0689">Ribosomal protein</keyword>
<keyword id="KW-0694">RNA-binding</keyword>
<keyword id="KW-0699">rRNA-binding</keyword>
<sequence length="99" mass="11569">MRAPEEVIIRPIITEKTNRLMEDLNKYVFEVHKDANKHEIKHAVEKLFGVKVKAVNTLYARPRVKRTITRRGRVYGATRGYKKAIITLDKNSKIDFMSL</sequence>
<dbReference type="EMBL" id="CP001130">
    <property type="protein sequence ID" value="ACG56957.1"/>
    <property type="molecule type" value="Genomic_DNA"/>
</dbReference>
<dbReference type="RefSeq" id="WP_012513313.1">
    <property type="nucleotide sequence ID" value="NC_011126.1"/>
</dbReference>
<dbReference type="SMR" id="B4U746"/>
<dbReference type="STRING" id="380749.HY04AAS1_0267"/>
<dbReference type="KEGG" id="hya:HY04AAS1_0267"/>
<dbReference type="eggNOG" id="COG0089">
    <property type="taxonomic scope" value="Bacteria"/>
</dbReference>
<dbReference type="HOGENOM" id="CLU_037562_3_2_0"/>
<dbReference type="OrthoDB" id="9793353at2"/>
<dbReference type="GO" id="GO:1990904">
    <property type="term" value="C:ribonucleoprotein complex"/>
    <property type="evidence" value="ECO:0007669"/>
    <property type="project" value="UniProtKB-KW"/>
</dbReference>
<dbReference type="GO" id="GO:0005840">
    <property type="term" value="C:ribosome"/>
    <property type="evidence" value="ECO:0007669"/>
    <property type="project" value="UniProtKB-KW"/>
</dbReference>
<dbReference type="GO" id="GO:0019843">
    <property type="term" value="F:rRNA binding"/>
    <property type="evidence" value="ECO:0007669"/>
    <property type="project" value="UniProtKB-UniRule"/>
</dbReference>
<dbReference type="GO" id="GO:0003735">
    <property type="term" value="F:structural constituent of ribosome"/>
    <property type="evidence" value="ECO:0007669"/>
    <property type="project" value="InterPro"/>
</dbReference>
<dbReference type="GO" id="GO:0006412">
    <property type="term" value="P:translation"/>
    <property type="evidence" value="ECO:0007669"/>
    <property type="project" value="UniProtKB-UniRule"/>
</dbReference>
<dbReference type="FunFam" id="3.30.70.330:FF:000001">
    <property type="entry name" value="50S ribosomal protein L23"/>
    <property type="match status" value="1"/>
</dbReference>
<dbReference type="Gene3D" id="3.30.70.330">
    <property type="match status" value="1"/>
</dbReference>
<dbReference type="HAMAP" id="MF_01369_B">
    <property type="entry name" value="Ribosomal_uL23_B"/>
    <property type="match status" value="1"/>
</dbReference>
<dbReference type="InterPro" id="IPR012677">
    <property type="entry name" value="Nucleotide-bd_a/b_plait_sf"/>
</dbReference>
<dbReference type="InterPro" id="IPR013025">
    <property type="entry name" value="Ribosomal_uL23-like"/>
</dbReference>
<dbReference type="InterPro" id="IPR012678">
    <property type="entry name" value="Ribosomal_uL23/eL15/eS24_sf"/>
</dbReference>
<dbReference type="NCBIfam" id="NF004363">
    <property type="entry name" value="PRK05738.2-4"/>
    <property type="match status" value="1"/>
</dbReference>
<dbReference type="PANTHER" id="PTHR11620">
    <property type="entry name" value="60S RIBOSOMAL PROTEIN L23A"/>
    <property type="match status" value="1"/>
</dbReference>
<dbReference type="Pfam" id="PF00276">
    <property type="entry name" value="Ribosomal_L23"/>
    <property type="match status" value="1"/>
</dbReference>
<dbReference type="SUPFAM" id="SSF54189">
    <property type="entry name" value="Ribosomal proteins S24e, L23 and L15e"/>
    <property type="match status" value="1"/>
</dbReference>
<gene>
    <name evidence="1" type="primary">rplW</name>
    <name type="ordered locus">HY04AAS1_0267</name>
</gene>